<keyword id="KW-0963">Cytoplasm</keyword>
<keyword id="KW-0539">Nucleus</keyword>
<keyword id="KW-0647">Proteasome</keyword>
<keyword id="KW-1185">Reference proteome</keyword>
<accession>F4JJE5</accession>
<accession>O23370</accession>
<proteinExistence type="uncertain"/>
<reference key="1">
    <citation type="journal article" date="1998" name="Nature">
        <title>Analysis of 1.9 Mb of contiguous sequence from chromosome 4 of Arabidopsis thaliana.</title>
        <authorList>
            <person name="Bevan M."/>
            <person name="Bancroft I."/>
            <person name="Bent E."/>
            <person name="Love K."/>
            <person name="Goodman H.M."/>
            <person name="Dean C."/>
            <person name="Bergkamp R."/>
            <person name="Dirkse W."/>
            <person name="van Staveren M."/>
            <person name="Stiekema W."/>
            <person name="Drost L."/>
            <person name="Ridley P."/>
            <person name="Hudson S.-A."/>
            <person name="Patel K."/>
            <person name="Murphy G."/>
            <person name="Piffanelli P."/>
            <person name="Wedler H."/>
            <person name="Wedler E."/>
            <person name="Wambutt R."/>
            <person name="Weitzenegger T."/>
            <person name="Pohl T."/>
            <person name="Terryn N."/>
            <person name="Gielen J."/>
            <person name="Villarroel R."/>
            <person name="De Clercq R."/>
            <person name="van Montagu M."/>
            <person name="Lecharny A."/>
            <person name="Aubourg S."/>
            <person name="Gy I."/>
            <person name="Kreis M."/>
            <person name="Lao N."/>
            <person name="Kavanagh T."/>
            <person name="Hempel S."/>
            <person name="Kotter P."/>
            <person name="Entian K.-D."/>
            <person name="Rieger M."/>
            <person name="Schaefer M."/>
            <person name="Funk B."/>
            <person name="Mueller-Auer S."/>
            <person name="Silvey M."/>
            <person name="James R."/>
            <person name="Monfort A."/>
            <person name="Pons A."/>
            <person name="Puigdomenech P."/>
            <person name="Douka A."/>
            <person name="Voukelatou E."/>
            <person name="Milioni D."/>
            <person name="Hatzopoulos P."/>
            <person name="Piravandi E."/>
            <person name="Obermaier B."/>
            <person name="Hilbert H."/>
            <person name="Duesterhoeft A."/>
            <person name="Moores T."/>
            <person name="Jones J.D.G."/>
            <person name="Eneva T."/>
            <person name="Palme K."/>
            <person name="Benes V."/>
            <person name="Rechmann S."/>
            <person name="Ansorge W."/>
            <person name="Cooke R."/>
            <person name="Berger C."/>
            <person name="Delseny M."/>
            <person name="Voet M."/>
            <person name="Volckaert G."/>
            <person name="Mewes H.-W."/>
            <person name="Klosterman S."/>
            <person name="Schueller C."/>
            <person name="Chalwatzis N."/>
        </authorList>
    </citation>
    <scope>NUCLEOTIDE SEQUENCE [LARGE SCALE GENOMIC DNA]</scope>
    <source>
        <strain>cv. Columbia</strain>
    </source>
</reference>
<reference key="2">
    <citation type="journal article" date="1999" name="Nature">
        <title>Sequence and analysis of chromosome 4 of the plant Arabidopsis thaliana.</title>
        <authorList>
            <person name="Mayer K.F.X."/>
            <person name="Schueller C."/>
            <person name="Wambutt R."/>
            <person name="Murphy G."/>
            <person name="Volckaert G."/>
            <person name="Pohl T."/>
            <person name="Duesterhoeft A."/>
            <person name="Stiekema W."/>
            <person name="Entian K.-D."/>
            <person name="Terryn N."/>
            <person name="Harris B."/>
            <person name="Ansorge W."/>
            <person name="Brandt P."/>
            <person name="Grivell L.A."/>
            <person name="Rieger M."/>
            <person name="Weichselgartner M."/>
            <person name="de Simone V."/>
            <person name="Obermaier B."/>
            <person name="Mache R."/>
            <person name="Mueller M."/>
            <person name="Kreis M."/>
            <person name="Delseny M."/>
            <person name="Puigdomenech P."/>
            <person name="Watson M."/>
            <person name="Schmidtheini T."/>
            <person name="Reichert B."/>
            <person name="Portetelle D."/>
            <person name="Perez-Alonso M."/>
            <person name="Boutry M."/>
            <person name="Bancroft I."/>
            <person name="Vos P."/>
            <person name="Hoheisel J."/>
            <person name="Zimmermann W."/>
            <person name="Wedler H."/>
            <person name="Ridley P."/>
            <person name="Langham S.-A."/>
            <person name="McCullagh B."/>
            <person name="Bilham L."/>
            <person name="Robben J."/>
            <person name="van der Schueren J."/>
            <person name="Grymonprez B."/>
            <person name="Chuang Y.-J."/>
            <person name="Vandenbussche F."/>
            <person name="Braeken M."/>
            <person name="Weltjens I."/>
            <person name="Voet M."/>
            <person name="Bastiaens I."/>
            <person name="Aert R."/>
            <person name="Defoor E."/>
            <person name="Weitzenegger T."/>
            <person name="Bothe G."/>
            <person name="Ramsperger U."/>
            <person name="Hilbert H."/>
            <person name="Braun M."/>
            <person name="Holzer E."/>
            <person name="Brandt A."/>
            <person name="Peters S."/>
            <person name="van Staveren M."/>
            <person name="Dirkse W."/>
            <person name="Mooijman P."/>
            <person name="Klein Lankhorst R."/>
            <person name="Rose M."/>
            <person name="Hauf J."/>
            <person name="Koetter P."/>
            <person name="Berneiser S."/>
            <person name="Hempel S."/>
            <person name="Feldpausch M."/>
            <person name="Lamberth S."/>
            <person name="Van den Daele H."/>
            <person name="De Keyser A."/>
            <person name="Buysshaert C."/>
            <person name="Gielen J."/>
            <person name="Villarroel R."/>
            <person name="De Clercq R."/>
            <person name="van Montagu M."/>
            <person name="Rogers J."/>
            <person name="Cronin A."/>
            <person name="Quail M.A."/>
            <person name="Bray-Allen S."/>
            <person name="Clark L."/>
            <person name="Doggett J."/>
            <person name="Hall S."/>
            <person name="Kay M."/>
            <person name="Lennard N."/>
            <person name="McLay K."/>
            <person name="Mayes R."/>
            <person name="Pettett A."/>
            <person name="Rajandream M.A."/>
            <person name="Lyne M."/>
            <person name="Benes V."/>
            <person name="Rechmann S."/>
            <person name="Borkova D."/>
            <person name="Bloecker H."/>
            <person name="Scharfe M."/>
            <person name="Grimm M."/>
            <person name="Loehnert T.-H."/>
            <person name="Dose S."/>
            <person name="de Haan M."/>
            <person name="Maarse A.C."/>
            <person name="Schaefer M."/>
            <person name="Mueller-Auer S."/>
            <person name="Gabel C."/>
            <person name="Fuchs M."/>
            <person name="Fartmann B."/>
            <person name="Granderath K."/>
            <person name="Dauner D."/>
            <person name="Herzl A."/>
            <person name="Neumann S."/>
            <person name="Argiriou A."/>
            <person name="Vitale D."/>
            <person name="Liguori R."/>
            <person name="Piravandi E."/>
            <person name="Massenet O."/>
            <person name="Quigley F."/>
            <person name="Clabauld G."/>
            <person name="Muendlein A."/>
            <person name="Felber R."/>
            <person name="Schnabl S."/>
            <person name="Hiller R."/>
            <person name="Schmidt W."/>
            <person name="Lecharny A."/>
            <person name="Aubourg S."/>
            <person name="Chefdor F."/>
            <person name="Cooke R."/>
            <person name="Berger C."/>
            <person name="Monfort A."/>
            <person name="Casacuberta E."/>
            <person name="Gibbons T."/>
            <person name="Weber N."/>
            <person name="Vandenbol M."/>
            <person name="Bargues M."/>
            <person name="Terol J."/>
            <person name="Torres A."/>
            <person name="Perez-Perez A."/>
            <person name="Purnelle B."/>
            <person name="Bent E."/>
            <person name="Johnson S."/>
            <person name="Tacon D."/>
            <person name="Jesse T."/>
            <person name="Heijnen L."/>
            <person name="Schwarz S."/>
            <person name="Scholler P."/>
            <person name="Heber S."/>
            <person name="Francs P."/>
            <person name="Bielke C."/>
            <person name="Frishman D."/>
            <person name="Haase D."/>
            <person name="Lemcke K."/>
            <person name="Mewes H.-W."/>
            <person name="Stocker S."/>
            <person name="Zaccaria P."/>
            <person name="Bevan M."/>
            <person name="Wilson R.K."/>
            <person name="de la Bastide M."/>
            <person name="Habermann K."/>
            <person name="Parnell L."/>
            <person name="Dedhia N."/>
            <person name="Gnoj L."/>
            <person name="Schutz K."/>
            <person name="Huang E."/>
            <person name="Spiegel L."/>
            <person name="Sekhon M."/>
            <person name="Murray J."/>
            <person name="Sheet P."/>
            <person name="Cordes M."/>
            <person name="Abu-Threideh J."/>
            <person name="Stoneking T."/>
            <person name="Kalicki J."/>
            <person name="Graves T."/>
            <person name="Harmon G."/>
            <person name="Edwards J."/>
            <person name="Latreille P."/>
            <person name="Courtney L."/>
            <person name="Cloud J."/>
            <person name="Abbott A."/>
            <person name="Scott K."/>
            <person name="Johnson D."/>
            <person name="Minx P."/>
            <person name="Bentley D."/>
            <person name="Fulton B."/>
            <person name="Miller N."/>
            <person name="Greco T."/>
            <person name="Kemp K."/>
            <person name="Kramer J."/>
            <person name="Fulton L."/>
            <person name="Mardis E."/>
            <person name="Dante M."/>
            <person name="Pepin K."/>
            <person name="Hillier L.W."/>
            <person name="Nelson J."/>
            <person name="Spieth J."/>
            <person name="Ryan E."/>
            <person name="Andrews S."/>
            <person name="Geisel C."/>
            <person name="Layman D."/>
            <person name="Du H."/>
            <person name="Ali J."/>
            <person name="Berghoff A."/>
            <person name="Jones K."/>
            <person name="Drone K."/>
            <person name="Cotton M."/>
            <person name="Joshu C."/>
            <person name="Antonoiu B."/>
            <person name="Zidanic M."/>
            <person name="Strong C."/>
            <person name="Sun H."/>
            <person name="Lamar B."/>
            <person name="Yordan C."/>
            <person name="Ma P."/>
            <person name="Zhong J."/>
            <person name="Preston R."/>
            <person name="Vil D."/>
            <person name="Shekher M."/>
            <person name="Matero A."/>
            <person name="Shah R."/>
            <person name="Swaby I.K."/>
            <person name="O'Shaughnessy A."/>
            <person name="Rodriguez M."/>
            <person name="Hoffman J."/>
            <person name="Till S."/>
            <person name="Granat S."/>
            <person name="Shohdy N."/>
            <person name="Hasegawa A."/>
            <person name="Hameed A."/>
            <person name="Lodhi M."/>
            <person name="Johnson A."/>
            <person name="Chen E."/>
            <person name="Marra M.A."/>
            <person name="Martienssen R."/>
            <person name="McCombie W.R."/>
        </authorList>
    </citation>
    <scope>NUCLEOTIDE SEQUENCE [LARGE SCALE GENOMIC DNA]</scope>
    <source>
        <strain>cv. Columbia</strain>
    </source>
</reference>
<reference key="3">
    <citation type="journal article" date="2017" name="Plant J.">
        <title>Araport11: a complete reannotation of the Arabidopsis thaliana reference genome.</title>
        <authorList>
            <person name="Cheng C.Y."/>
            <person name="Krishnakumar V."/>
            <person name="Chan A.P."/>
            <person name="Thibaud-Nissen F."/>
            <person name="Schobel S."/>
            <person name="Town C.D."/>
        </authorList>
    </citation>
    <scope>GENOME REANNOTATION</scope>
    <source>
        <strain>cv. Columbia</strain>
    </source>
</reference>
<reference key="4">
    <citation type="journal article" date="1998" name="Genetics">
        <title>Molecular organization of the 20S proteasome gene family from Arabidopsis thaliana.</title>
        <authorList>
            <person name="Fu H."/>
            <person name="Doelling J.H."/>
            <person name="Arendt C.S."/>
            <person name="Hochstrasser M."/>
            <person name="Vierstra R.D."/>
        </authorList>
    </citation>
    <scope>GENE FAMILY</scope>
    <scope>NOMENCLATURE</scope>
    <source>
        <strain>cv. Columbia</strain>
    </source>
</reference>
<reference key="5">
    <citation type="journal article" date="1999" name="Mol. Biol. Rep.">
        <title>Structure and functional analyses of the 26S proteasome subunits from plants.</title>
        <authorList>
            <person name="Fu H."/>
            <person name="Girod P.-A."/>
            <person name="Doelling J.H."/>
            <person name="van Nocker S."/>
            <person name="Hochstrasser M."/>
            <person name="Finley D."/>
            <person name="Vierstra R.D."/>
        </authorList>
    </citation>
    <scope>SUBUNIT</scope>
</reference>
<reference key="6">
    <citation type="journal article" date="2010" name="J. Biol. Chem.">
        <title>Affinity purification of the Arabidopsis 26 S proteasome reveals a diverse array of plant proteolytic complexes.</title>
        <authorList>
            <person name="Book A.J."/>
            <person name="Gladman N.P."/>
            <person name="Lee S.S."/>
            <person name="Scalf M."/>
            <person name="Smith L.M."/>
            <person name="Vierstra R.D."/>
        </authorList>
    </citation>
    <scope>CHARACTERIZATION OF THE 26S PROTEASOME COMPLEX</scope>
    <scope>SUBUNIT</scope>
</reference>
<name>PSA4B_ARATH</name>
<gene>
    <name type="primary">PAC2</name>
    <name type="ordered locus">At4g15165</name>
    <name type="ORF">dl3625w</name>
    <name type="ORF">FCAALL.211</name>
</gene>
<sequence>MSRRYDSRTTIFSPEGRLYQVEYAMEAIGNAGSAIGILAKDGVVLVGEKKVTSKLLQTSSSMEKMYKIDDHVACAVAGIMSDANILINTARVQAQRWDRNHGFQLYMSDPSGNYGGWQAAAVGANNQAAQSILKQDYKDDATREEVVQLAIKVLSKTMDSTSLTAEKLELAELYLTPSKCVKYHVHSPDSLTKLLVKHGVTQPAAETS</sequence>
<dbReference type="EMBL" id="Z97338">
    <property type="protein sequence ID" value="CAB10295.1"/>
    <property type="status" value="ALT_SEQ"/>
    <property type="molecule type" value="Genomic_DNA"/>
</dbReference>
<dbReference type="EMBL" id="AL161540">
    <property type="protein sequence ID" value="CAB78558.1"/>
    <property type="status" value="ALT_SEQ"/>
    <property type="molecule type" value="Genomic_DNA"/>
</dbReference>
<dbReference type="EMBL" id="CP002687">
    <property type="protein sequence ID" value="AEE83564.1"/>
    <property type="molecule type" value="Genomic_DNA"/>
</dbReference>
<dbReference type="PIR" id="E71415">
    <property type="entry name" value="E71415"/>
</dbReference>
<dbReference type="RefSeq" id="NP_001190735.1">
    <property type="nucleotide sequence ID" value="NM_001203806.1"/>
</dbReference>
<dbReference type="SMR" id="F4JJE5"/>
<dbReference type="FunCoup" id="F4JJE5">
    <property type="interactions" value="3355"/>
</dbReference>
<dbReference type="STRING" id="3702.F4JJE5"/>
<dbReference type="MEROPS" id="T01.973"/>
<dbReference type="PaxDb" id="3702-AT4G15165.1"/>
<dbReference type="ProteomicsDB" id="226387"/>
<dbReference type="EnsemblPlants" id="AT4G15165.1">
    <property type="protein sequence ID" value="AT4G15165.1"/>
    <property type="gene ID" value="AT4G15165"/>
</dbReference>
<dbReference type="GeneID" id="10723067"/>
<dbReference type="Gramene" id="AT4G15165.1">
    <property type="protein sequence ID" value="AT4G15165.1"/>
    <property type="gene ID" value="AT4G15165"/>
</dbReference>
<dbReference type="KEGG" id="ath:AT4G15165"/>
<dbReference type="Araport" id="AT4G15165"/>
<dbReference type="TAIR" id="AT4G15165"/>
<dbReference type="eggNOG" id="KOG0178">
    <property type="taxonomic scope" value="Eukaryota"/>
</dbReference>
<dbReference type="HOGENOM" id="CLU_035750_4_3_1"/>
<dbReference type="InParanoid" id="F4JJE5"/>
<dbReference type="OMA" id="ICASAGW"/>
<dbReference type="Proteomes" id="UP000006548">
    <property type="component" value="Chromosome 4"/>
</dbReference>
<dbReference type="ExpressionAtlas" id="F4JJE5">
    <property type="expression patterns" value="baseline and differential"/>
</dbReference>
<dbReference type="GO" id="GO:0005829">
    <property type="term" value="C:cytosol"/>
    <property type="evidence" value="ECO:0007005"/>
    <property type="project" value="TAIR"/>
</dbReference>
<dbReference type="GO" id="GO:0005634">
    <property type="term" value="C:nucleus"/>
    <property type="evidence" value="ECO:0007669"/>
    <property type="project" value="UniProtKB-SubCell"/>
</dbReference>
<dbReference type="GO" id="GO:0019773">
    <property type="term" value="C:proteasome core complex, alpha-subunit complex"/>
    <property type="evidence" value="ECO:0007669"/>
    <property type="project" value="InterPro"/>
</dbReference>
<dbReference type="GO" id="GO:0006511">
    <property type="term" value="P:ubiquitin-dependent protein catabolic process"/>
    <property type="evidence" value="ECO:0007669"/>
    <property type="project" value="InterPro"/>
</dbReference>
<dbReference type="FunFam" id="3.60.20.10:FF:000145">
    <property type="entry name" value="Proteasome subunit alpha type"/>
    <property type="match status" value="1"/>
</dbReference>
<dbReference type="Gene3D" id="3.60.20.10">
    <property type="entry name" value="Glutamine Phosphoribosylpyrophosphate, subunit 1, domain 1"/>
    <property type="match status" value="2"/>
</dbReference>
<dbReference type="InterPro" id="IPR029055">
    <property type="entry name" value="Ntn_hydrolases_N"/>
</dbReference>
<dbReference type="InterPro" id="IPR050115">
    <property type="entry name" value="Proteasome_alpha"/>
</dbReference>
<dbReference type="InterPro" id="IPR023332">
    <property type="entry name" value="Proteasome_alpha-type"/>
</dbReference>
<dbReference type="InterPro" id="IPR000426">
    <property type="entry name" value="Proteasome_asu_N"/>
</dbReference>
<dbReference type="InterPro" id="IPR001353">
    <property type="entry name" value="Proteasome_sua/b"/>
</dbReference>
<dbReference type="PANTHER" id="PTHR11599">
    <property type="entry name" value="PROTEASOME SUBUNIT ALPHA/BETA"/>
    <property type="match status" value="1"/>
</dbReference>
<dbReference type="Pfam" id="PF00227">
    <property type="entry name" value="Proteasome"/>
    <property type="match status" value="1"/>
</dbReference>
<dbReference type="Pfam" id="PF10584">
    <property type="entry name" value="Proteasome_A_N"/>
    <property type="match status" value="1"/>
</dbReference>
<dbReference type="SMART" id="SM00948">
    <property type="entry name" value="Proteasome_A_N"/>
    <property type="match status" value="1"/>
</dbReference>
<dbReference type="SUPFAM" id="SSF56235">
    <property type="entry name" value="N-terminal nucleophile aminohydrolases (Ntn hydrolases)"/>
    <property type="match status" value="1"/>
</dbReference>
<dbReference type="PROSITE" id="PS00388">
    <property type="entry name" value="PROTEASOME_ALPHA_1"/>
    <property type="match status" value="1"/>
</dbReference>
<dbReference type="PROSITE" id="PS51475">
    <property type="entry name" value="PROTEASOME_ALPHA_2"/>
    <property type="match status" value="1"/>
</dbReference>
<evidence type="ECO:0000250" key="1"/>
<evidence type="ECO:0000255" key="2">
    <source>
        <dbReference type="PROSITE-ProRule" id="PRU00808"/>
    </source>
</evidence>
<evidence type="ECO:0000269" key="3">
    <source>
    </source>
</evidence>
<evidence type="ECO:0000269" key="4">
    <source>
    </source>
</evidence>
<evidence type="ECO:0000305" key="5"/>
<evidence type="ECO:0000305" key="6">
    <source>
    </source>
</evidence>
<protein>
    <recommendedName>
        <fullName>Putative proteasome subunit alpha type-4-B</fullName>
    </recommendedName>
    <alternativeName>
        <fullName>20S proteasome alpha subunit C-2</fullName>
    </alternativeName>
    <alternativeName>
        <fullName>Proteasome subunit alpha type-3</fullName>
    </alternativeName>
</protein>
<organism>
    <name type="scientific">Arabidopsis thaliana</name>
    <name type="common">Mouse-ear cress</name>
    <dbReference type="NCBI Taxonomy" id="3702"/>
    <lineage>
        <taxon>Eukaryota</taxon>
        <taxon>Viridiplantae</taxon>
        <taxon>Streptophyta</taxon>
        <taxon>Embryophyta</taxon>
        <taxon>Tracheophyta</taxon>
        <taxon>Spermatophyta</taxon>
        <taxon>Magnoliopsida</taxon>
        <taxon>eudicotyledons</taxon>
        <taxon>Gunneridae</taxon>
        <taxon>Pentapetalae</taxon>
        <taxon>rosids</taxon>
        <taxon>malvids</taxon>
        <taxon>Brassicales</taxon>
        <taxon>Brassicaceae</taxon>
        <taxon>Camelineae</taxon>
        <taxon>Arabidopsis</taxon>
    </lineage>
</organism>
<comment type="function">
    <text evidence="1">The proteasome is a multicatalytic proteinase complex which is characterized by its ability to cleave peptides with Arg, Phe, Tyr, Leu, and Glu adjacent to the leaving group at neutral or slightly basic pH. The proteasome has an ATP-dependent proteolytic activity (By similarity).</text>
</comment>
<comment type="subunit">
    <text evidence="3 4">Component of the 20S core complex of the 26S proteasome. The 26S proteasome is composed of a core protease (CP), known as the 20S proteasome, capped at one or both ends by the 19S regulatory particle (RP/PA700). The 20S proteasome core is composed of 28 subunits that are arranged in four stacked rings, resulting in a barrel-shaped structure. The two end rings are each formed by seven alpha subunits, and the two central rings are each formed by seven beta subunits. The catalytic chamber with the active sites is on the inside of the barrel.</text>
</comment>
<comment type="subcellular location">
    <subcellularLocation>
        <location evidence="1">Cytoplasm</location>
    </subcellularLocation>
    <subcellularLocation>
        <location evidence="1">Nucleus</location>
    </subcellularLocation>
</comment>
<comment type="similarity">
    <text evidence="2">Belongs to the peptidase T1A family.</text>
</comment>
<comment type="caution">
    <text evidence="6">Was not identified as subunit of the 26S proteasome complex (PubMed:20516081). Could be the product of a pseudogene.</text>
</comment>
<comment type="sequence caution" evidence="5">
    <conflict type="erroneous gene model prediction">
        <sequence resource="EMBL-CDS" id="CAB10295"/>
    </conflict>
    <text>The predicted gene has been split into 2 genes: At4g15160 and At4g15165.</text>
</comment>
<comment type="sequence caution" evidence="5">
    <conflict type="erroneous gene model prediction">
        <sequence resource="EMBL-CDS" id="CAB78558"/>
    </conflict>
    <text>The predicted gene has been split into 2 genes: At4g15160 and At4g15165.</text>
</comment>
<feature type="chain" id="PRO_0000423170" description="Putative proteasome subunit alpha type-4-B">
    <location>
        <begin position="1"/>
        <end position="208"/>
    </location>
</feature>